<accession>Q0K3S6</accession>
<dbReference type="EC" id="1.2.1.10" evidence="1"/>
<dbReference type="EMBL" id="AM260480">
    <property type="protein sequence ID" value="CAJ95348.1"/>
    <property type="molecule type" value="Genomic_DNA"/>
</dbReference>
<dbReference type="RefSeq" id="WP_010810409.1">
    <property type="nucleotide sequence ID" value="NZ_CP039288.1"/>
</dbReference>
<dbReference type="SMR" id="Q0K3S6"/>
<dbReference type="STRING" id="381666.H16_B0551"/>
<dbReference type="KEGG" id="reh:H16_B0551"/>
<dbReference type="eggNOG" id="COG4569">
    <property type="taxonomic scope" value="Bacteria"/>
</dbReference>
<dbReference type="HOGENOM" id="CLU_062208_0_0_4"/>
<dbReference type="OrthoDB" id="9786743at2"/>
<dbReference type="Proteomes" id="UP000008210">
    <property type="component" value="Chromosome 2"/>
</dbReference>
<dbReference type="GO" id="GO:0008774">
    <property type="term" value="F:acetaldehyde dehydrogenase (acetylating) activity"/>
    <property type="evidence" value="ECO:0007669"/>
    <property type="project" value="UniProtKB-UniRule"/>
</dbReference>
<dbReference type="GO" id="GO:0051287">
    <property type="term" value="F:NAD binding"/>
    <property type="evidence" value="ECO:0007669"/>
    <property type="project" value="UniProtKB-UniRule"/>
</dbReference>
<dbReference type="GO" id="GO:0009056">
    <property type="term" value="P:catabolic process"/>
    <property type="evidence" value="ECO:0007669"/>
    <property type="project" value="UniProtKB-KW"/>
</dbReference>
<dbReference type="CDD" id="cd23933">
    <property type="entry name" value="ALDH_C"/>
    <property type="match status" value="1"/>
</dbReference>
<dbReference type="Gene3D" id="3.30.360.10">
    <property type="entry name" value="Dihydrodipicolinate Reductase, domain 2"/>
    <property type="match status" value="1"/>
</dbReference>
<dbReference type="Gene3D" id="3.40.50.720">
    <property type="entry name" value="NAD(P)-binding Rossmann-like Domain"/>
    <property type="match status" value="1"/>
</dbReference>
<dbReference type="HAMAP" id="MF_01657">
    <property type="entry name" value="Ac_ald_DH_ac"/>
    <property type="match status" value="1"/>
</dbReference>
<dbReference type="InterPro" id="IPR003361">
    <property type="entry name" value="Acetaldehyde_dehydrogenase"/>
</dbReference>
<dbReference type="InterPro" id="IPR015426">
    <property type="entry name" value="Acetylaldehyde_DH_C"/>
</dbReference>
<dbReference type="InterPro" id="IPR036291">
    <property type="entry name" value="NAD(P)-bd_dom_sf"/>
</dbReference>
<dbReference type="InterPro" id="IPR000534">
    <property type="entry name" value="Semialdehyde_DH_NAD-bd"/>
</dbReference>
<dbReference type="NCBIfam" id="TIGR03215">
    <property type="entry name" value="ac_ald_DH_ac"/>
    <property type="match status" value="1"/>
</dbReference>
<dbReference type="NCBIfam" id="NF006157">
    <property type="entry name" value="PRK08300.1"/>
    <property type="match status" value="1"/>
</dbReference>
<dbReference type="Pfam" id="PF09290">
    <property type="entry name" value="AcetDehyd-dimer"/>
    <property type="match status" value="1"/>
</dbReference>
<dbReference type="Pfam" id="PF01118">
    <property type="entry name" value="Semialdhyde_dh"/>
    <property type="match status" value="1"/>
</dbReference>
<dbReference type="PIRSF" id="PIRSF015689">
    <property type="entry name" value="Actaldh_dh_actl"/>
    <property type="match status" value="1"/>
</dbReference>
<dbReference type="SMART" id="SM00859">
    <property type="entry name" value="Semialdhyde_dh"/>
    <property type="match status" value="1"/>
</dbReference>
<dbReference type="SUPFAM" id="SSF55347">
    <property type="entry name" value="Glyceraldehyde-3-phosphate dehydrogenase-like, C-terminal domain"/>
    <property type="match status" value="1"/>
</dbReference>
<dbReference type="SUPFAM" id="SSF51735">
    <property type="entry name" value="NAD(P)-binding Rossmann-fold domains"/>
    <property type="match status" value="1"/>
</dbReference>
<proteinExistence type="inferred from homology"/>
<name>ACDH1_CUPNH</name>
<feature type="chain" id="PRO_0000387712" description="Acetaldehyde dehydrogenase 1">
    <location>
        <begin position="1"/>
        <end position="314"/>
    </location>
</feature>
<feature type="active site" description="Acyl-thioester intermediate" evidence="1">
    <location>
        <position position="134"/>
    </location>
</feature>
<feature type="binding site" evidence="1">
    <location>
        <begin position="16"/>
        <end position="19"/>
    </location>
    <ligand>
        <name>NAD(+)</name>
        <dbReference type="ChEBI" id="CHEBI:57540"/>
    </ligand>
</feature>
<feature type="binding site" evidence="1">
    <location>
        <begin position="165"/>
        <end position="173"/>
    </location>
    <ligand>
        <name>NAD(+)</name>
        <dbReference type="ChEBI" id="CHEBI:57540"/>
    </ligand>
</feature>
<feature type="binding site" evidence="1">
    <location>
        <position position="292"/>
    </location>
    <ligand>
        <name>NAD(+)</name>
        <dbReference type="ChEBI" id="CHEBI:57540"/>
    </ligand>
</feature>
<keyword id="KW-0058">Aromatic hydrocarbons catabolism</keyword>
<keyword id="KW-0520">NAD</keyword>
<keyword id="KW-0560">Oxidoreductase</keyword>
<keyword id="KW-1185">Reference proteome</keyword>
<evidence type="ECO:0000255" key="1">
    <source>
        <dbReference type="HAMAP-Rule" id="MF_01657"/>
    </source>
</evidence>
<sequence>MDMKASGHHKVAIIGSGNIGTDLMIKVMRHGRSLEMGAMVGIDAASDGLARAARLGVPTTAEGIDGLVGMPGFGDIRIAFDATSAGAHAHHNRVLQQHGVRVIDLTPASIGPYVVPVVNLDQHLDAPNINMVTCGGQATIPMVAAVSRVARVHYAEIVASISSRSAGPGTRANIDEFTETTSQALCSVGGAARGKAIIVLNPAEPPLMMRDTVFTLSEDGDEAEIAASVEAMAQAVQGYVPGYRLKQRVQFERIAASAPLNIPGLGPMSGLKTSIFLEVEGAAHYLPAYAGNLDIMTSAALACAERLAETRLSA</sequence>
<protein>
    <recommendedName>
        <fullName evidence="1">Acetaldehyde dehydrogenase 1</fullName>
        <ecNumber evidence="1">1.2.1.10</ecNumber>
    </recommendedName>
    <alternativeName>
        <fullName evidence="1">Acetaldehyde dehydrogenase [acetylating] 1</fullName>
    </alternativeName>
</protein>
<reference key="1">
    <citation type="journal article" date="2006" name="Nat. Biotechnol.">
        <title>Genome sequence of the bioplastic-producing 'Knallgas' bacterium Ralstonia eutropha H16.</title>
        <authorList>
            <person name="Pohlmann A."/>
            <person name="Fricke W.F."/>
            <person name="Reinecke F."/>
            <person name="Kusian B."/>
            <person name="Liesegang H."/>
            <person name="Cramm R."/>
            <person name="Eitinger T."/>
            <person name="Ewering C."/>
            <person name="Poetter M."/>
            <person name="Schwartz E."/>
            <person name="Strittmatter A."/>
            <person name="Voss I."/>
            <person name="Gottschalk G."/>
            <person name="Steinbuechel A."/>
            <person name="Friedrich B."/>
            <person name="Bowien B."/>
        </authorList>
    </citation>
    <scope>NUCLEOTIDE SEQUENCE [LARGE SCALE GENOMIC DNA]</scope>
    <source>
        <strain>ATCC 17699 / DSM 428 / KCTC 22496 / NCIMB 10442 / H16 / Stanier 337</strain>
    </source>
</reference>
<gene>
    <name type="primary">mhpF</name>
    <name type="ordered locus">H16_B0551</name>
</gene>
<organism>
    <name type="scientific">Cupriavidus necator (strain ATCC 17699 / DSM 428 / KCTC 22496 / NCIMB 10442 / H16 / Stanier 337)</name>
    <name type="common">Ralstonia eutropha</name>
    <dbReference type="NCBI Taxonomy" id="381666"/>
    <lineage>
        <taxon>Bacteria</taxon>
        <taxon>Pseudomonadati</taxon>
        <taxon>Pseudomonadota</taxon>
        <taxon>Betaproteobacteria</taxon>
        <taxon>Burkholderiales</taxon>
        <taxon>Burkholderiaceae</taxon>
        <taxon>Cupriavidus</taxon>
    </lineage>
</organism>
<comment type="catalytic activity">
    <reaction evidence="1">
        <text>acetaldehyde + NAD(+) + CoA = acetyl-CoA + NADH + H(+)</text>
        <dbReference type="Rhea" id="RHEA:23288"/>
        <dbReference type="ChEBI" id="CHEBI:15343"/>
        <dbReference type="ChEBI" id="CHEBI:15378"/>
        <dbReference type="ChEBI" id="CHEBI:57287"/>
        <dbReference type="ChEBI" id="CHEBI:57288"/>
        <dbReference type="ChEBI" id="CHEBI:57540"/>
        <dbReference type="ChEBI" id="CHEBI:57945"/>
        <dbReference type="EC" id="1.2.1.10"/>
    </reaction>
</comment>
<comment type="similarity">
    <text evidence="1">Belongs to the acetaldehyde dehydrogenase family.</text>
</comment>